<comment type="function">
    <text>Guanine nucleotide-binding proteins (G proteins) are involved as modulators or transducers in various transmembrane signaling systems.</text>
</comment>
<comment type="cofactor">
    <cofactor evidence="1">
        <name>Mg(2+)</name>
        <dbReference type="ChEBI" id="CHEBI:18420"/>
    </cofactor>
</comment>
<comment type="subunit">
    <text>G proteins are composed of 3 units; alpha, beta and gamma. The alpha chain contains the guanine nucleotide binding site.</text>
</comment>
<comment type="similarity">
    <text evidence="4">Belongs to the G-alpha family. G(q) subfamily.</text>
</comment>
<organism>
    <name type="scientific">Neurospora crassa (strain ATCC 24698 / 74-OR23-1A / CBS 708.71 / DSM 1257 / FGSC 987)</name>
    <dbReference type="NCBI Taxonomy" id="367110"/>
    <lineage>
        <taxon>Eukaryota</taxon>
        <taxon>Fungi</taxon>
        <taxon>Dikarya</taxon>
        <taxon>Ascomycota</taxon>
        <taxon>Pezizomycotina</taxon>
        <taxon>Sordariomycetes</taxon>
        <taxon>Sordariomycetidae</taxon>
        <taxon>Sordariales</taxon>
        <taxon>Sordariaceae</taxon>
        <taxon>Neurospora</taxon>
    </lineage>
</organism>
<keyword id="KW-0342">GTP-binding</keyword>
<keyword id="KW-0378">Hydrolase</keyword>
<keyword id="KW-0460">Magnesium</keyword>
<keyword id="KW-0479">Metal-binding</keyword>
<keyword id="KW-0547">Nucleotide-binding</keyword>
<keyword id="KW-1185">Reference proteome</keyword>
<keyword id="KW-0807">Transducer</keyword>
<protein>
    <recommendedName>
        <fullName>Guanine nucleotide-binding protein alpha-2 subunit</fullName>
    </recommendedName>
    <alternativeName>
        <fullName>GP2-alpha</fullName>
    </alternativeName>
</protein>
<dbReference type="EMBL" id="L11452">
    <property type="protein sequence ID" value="AAA02559.1"/>
    <property type="molecule type" value="mRNA"/>
</dbReference>
<dbReference type="EMBL" id="AF004846">
    <property type="protein sequence ID" value="AAD01207.1"/>
    <property type="molecule type" value="Genomic_DNA"/>
</dbReference>
<dbReference type="EMBL" id="BX294092">
    <property type="protein sequence ID" value="CAD71253.1"/>
    <property type="molecule type" value="Genomic_DNA"/>
</dbReference>
<dbReference type="EMBL" id="CM002240">
    <property type="protein sequence ID" value="ESA42608.1"/>
    <property type="molecule type" value="Genomic_DNA"/>
</dbReference>
<dbReference type="EMBL" id="CM002240">
    <property type="protein sequence ID" value="ESA42609.1"/>
    <property type="molecule type" value="Genomic_DNA"/>
</dbReference>
<dbReference type="PIR" id="T50479">
    <property type="entry name" value="T50479"/>
</dbReference>
<dbReference type="RefSeq" id="XP_011394709.1">
    <property type="nucleotide sequence ID" value="XM_011396407.1"/>
</dbReference>
<dbReference type="RefSeq" id="XP_011394710.1">
    <property type="nucleotide sequence ID" value="XM_011396408.1"/>
</dbReference>
<dbReference type="SMR" id="Q05424"/>
<dbReference type="FunCoup" id="Q05424">
    <property type="interactions" value="462"/>
</dbReference>
<dbReference type="STRING" id="367110.Q05424"/>
<dbReference type="PaxDb" id="5141-EFNCRP00000006662"/>
<dbReference type="EnsemblFungi" id="ESA42608">
    <property type="protein sequence ID" value="ESA42608"/>
    <property type="gene ID" value="NCU06729"/>
</dbReference>
<dbReference type="EnsemblFungi" id="ESA42609">
    <property type="protein sequence ID" value="ESA42609"/>
    <property type="gene ID" value="NCU06729"/>
</dbReference>
<dbReference type="GeneID" id="3876804"/>
<dbReference type="KEGG" id="ncr:NCU06729"/>
<dbReference type="VEuPathDB" id="FungiDB:NCU06729"/>
<dbReference type="HOGENOM" id="CLU_014184_6_0_1"/>
<dbReference type="InParanoid" id="Q05424"/>
<dbReference type="OrthoDB" id="5817230at2759"/>
<dbReference type="BRENDA" id="3.6.5.1">
    <property type="organism ID" value="3627"/>
</dbReference>
<dbReference type="Proteomes" id="UP000001805">
    <property type="component" value="Chromosome 2, Linkage Group V"/>
</dbReference>
<dbReference type="GO" id="GO:0090726">
    <property type="term" value="C:cortical dynamic polarity patch"/>
    <property type="evidence" value="ECO:0007669"/>
    <property type="project" value="EnsemblFungi"/>
</dbReference>
<dbReference type="GO" id="GO:0005737">
    <property type="term" value="C:cytoplasm"/>
    <property type="evidence" value="ECO:0000318"/>
    <property type="project" value="GO_Central"/>
</dbReference>
<dbReference type="GO" id="GO:0005834">
    <property type="term" value="C:heterotrimeric G-protein complex"/>
    <property type="evidence" value="ECO:0000318"/>
    <property type="project" value="GO_Central"/>
</dbReference>
<dbReference type="GO" id="GO:0001664">
    <property type="term" value="F:G protein-coupled receptor binding"/>
    <property type="evidence" value="ECO:0000318"/>
    <property type="project" value="GO_Central"/>
</dbReference>
<dbReference type="GO" id="GO:0031683">
    <property type="term" value="F:G-protein beta/gamma-subunit complex binding"/>
    <property type="evidence" value="ECO:0000318"/>
    <property type="project" value="GO_Central"/>
</dbReference>
<dbReference type="GO" id="GO:0005525">
    <property type="term" value="F:GTP binding"/>
    <property type="evidence" value="ECO:0007669"/>
    <property type="project" value="UniProtKB-KW"/>
</dbReference>
<dbReference type="GO" id="GO:0003924">
    <property type="term" value="F:GTPase activity"/>
    <property type="evidence" value="ECO:0000318"/>
    <property type="project" value="GO_Central"/>
</dbReference>
<dbReference type="GO" id="GO:0046872">
    <property type="term" value="F:metal ion binding"/>
    <property type="evidence" value="ECO:0007669"/>
    <property type="project" value="UniProtKB-KW"/>
</dbReference>
<dbReference type="GO" id="GO:0007186">
    <property type="term" value="P:G protein-coupled receptor signaling pathway"/>
    <property type="evidence" value="ECO:0007669"/>
    <property type="project" value="InterPro"/>
</dbReference>
<dbReference type="GO" id="GO:0180040">
    <property type="term" value="P:negative regulation of pheromone response MAPK cascade"/>
    <property type="evidence" value="ECO:0007669"/>
    <property type="project" value="EnsemblFungi"/>
</dbReference>
<dbReference type="GO" id="GO:0031139">
    <property type="term" value="P:positive regulation of conjugation with cellular fusion"/>
    <property type="evidence" value="ECO:0007669"/>
    <property type="project" value="EnsemblFungi"/>
</dbReference>
<dbReference type="CDD" id="cd00066">
    <property type="entry name" value="G-alpha"/>
    <property type="match status" value="1"/>
</dbReference>
<dbReference type="FunFam" id="1.10.400.10:FF:000009">
    <property type="entry name" value="Guanine nucleotide-binding protein G(O) subunit alpha"/>
    <property type="match status" value="1"/>
</dbReference>
<dbReference type="FunFam" id="3.40.50.300:FF:000051">
    <property type="entry name" value="Guanine nucleotide-binding protein subunit alpha"/>
    <property type="match status" value="1"/>
</dbReference>
<dbReference type="FunFam" id="3.40.50.300:FF:000692">
    <property type="entry name" value="Guanine nucleotide-binding protein subunit alpha"/>
    <property type="match status" value="1"/>
</dbReference>
<dbReference type="Gene3D" id="1.10.400.10">
    <property type="entry name" value="GI Alpha 1, domain 2-like"/>
    <property type="match status" value="1"/>
</dbReference>
<dbReference type="Gene3D" id="3.40.50.300">
    <property type="entry name" value="P-loop containing nucleotide triphosphate hydrolases"/>
    <property type="match status" value="1"/>
</dbReference>
<dbReference type="InterPro" id="IPR002975">
    <property type="entry name" value="Fungi_Gprotein_alpha"/>
</dbReference>
<dbReference type="InterPro" id="IPR001019">
    <property type="entry name" value="Gprotein_alpha_su"/>
</dbReference>
<dbReference type="InterPro" id="IPR011025">
    <property type="entry name" value="GproteinA_insert"/>
</dbReference>
<dbReference type="InterPro" id="IPR027417">
    <property type="entry name" value="P-loop_NTPase"/>
</dbReference>
<dbReference type="PANTHER" id="PTHR10218">
    <property type="entry name" value="GTP-BINDING PROTEIN ALPHA SUBUNIT"/>
    <property type="match status" value="1"/>
</dbReference>
<dbReference type="PANTHER" id="PTHR10218:SF242">
    <property type="entry name" value="GUANINE NUCLEOTIDE-BINDING PROTEIN ALPHA-1 SUBUNIT"/>
    <property type="match status" value="1"/>
</dbReference>
<dbReference type="Pfam" id="PF00503">
    <property type="entry name" value="G-alpha"/>
    <property type="match status" value="1"/>
</dbReference>
<dbReference type="PRINTS" id="PR00318">
    <property type="entry name" value="GPROTEINA"/>
</dbReference>
<dbReference type="PRINTS" id="PR01241">
    <property type="entry name" value="GPROTEINAFNG"/>
</dbReference>
<dbReference type="SMART" id="SM00275">
    <property type="entry name" value="G_alpha"/>
    <property type="match status" value="1"/>
</dbReference>
<dbReference type="SUPFAM" id="SSF52540">
    <property type="entry name" value="P-loop containing nucleoside triphosphate hydrolases"/>
    <property type="match status" value="1"/>
</dbReference>
<dbReference type="SUPFAM" id="SSF47895">
    <property type="entry name" value="Transducin (alpha subunit), insertion domain"/>
    <property type="match status" value="1"/>
</dbReference>
<dbReference type="PROSITE" id="PS51882">
    <property type="entry name" value="G_ALPHA"/>
    <property type="match status" value="1"/>
</dbReference>
<reference key="1">
    <citation type="journal article" date="1993" name="J. Biol. Chem.">
        <title>Identification of a G protein alpha subunit from Neurospora crassa that is a member of the Gi family.</title>
        <authorList>
            <person name="Borkovich K.A."/>
            <person name="Turner G.E."/>
        </authorList>
    </citation>
    <scope>NUCLEOTIDE SEQUENCE [MRNA]</scope>
    <source>
        <strain>ATCC 24698 / 74-OR23-1A / CBS 708.71 / DSM 1257 / FGSC 987</strain>
    </source>
</reference>
<reference key="2">
    <citation type="journal article" date="1997" name="Genetics">
        <title>Overlapping functions for two G protein alpha subunits in Neurospora crassa.</title>
        <authorList>
            <person name="Baasiri R.A."/>
            <person name="Lu X."/>
            <person name="Rowley P.S."/>
            <person name="Turner G.E."/>
            <person name="Borkovich K.A."/>
        </authorList>
    </citation>
    <scope>NUCLEOTIDE SEQUENCE [GENOMIC DNA]</scope>
    <source>
        <strain>ATCC 24698 / 74-OR23-1A / CBS 708.71 / DSM 1257 / FGSC 987</strain>
    </source>
</reference>
<reference key="3">
    <citation type="journal article" date="2003" name="Nucleic Acids Res.">
        <title>What's in the genome of a filamentous fungus? Analysis of the Neurospora genome sequence.</title>
        <authorList>
            <person name="Mannhaupt G."/>
            <person name="Montrone C."/>
            <person name="Haase D."/>
            <person name="Mewes H.-W."/>
            <person name="Aign V."/>
            <person name="Hoheisel J.D."/>
            <person name="Fartmann B."/>
            <person name="Nyakatura G."/>
            <person name="Kempken F."/>
            <person name="Maier J."/>
            <person name="Schulte U."/>
        </authorList>
    </citation>
    <scope>NUCLEOTIDE SEQUENCE [LARGE SCALE GENOMIC DNA]</scope>
    <source>
        <strain>ATCC 24698 / 74-OR23-1A / CBS 708.71 / DSM 1257 / FGSC 987</strain>
    </source>
</reference>
<reference key="4">
    <citation type="journal article" date="2003" name="Nature">
        <title>The genome sequence of the filamentous fungus Neurospora crassa.</title>
        <authorList>
            <person name="Galagan J.E."/>
            <person name="Calvo S.E."/>
            <person name="Borkovich K.A."/>
            <person name="Selker E.U."/>
            <person name="Read N.D."/>
            <person name="Jaffe D.B."/>
            <person name="FitzHugh W."/>
            <person name="Ma L.-J."/>
            <person name="Smirnov S."/>
            <person name="Purcell S."/>
            <person name="Rehman B."/>
            <person name="Elkins T."/>
            <person name="Engels R."/>
            <person name="Wang S."/>
            <person name="Nielsen C.B."/>
            <person name="Butler J."/>
            <person name="Endrizzi M."/>
            <person name="Qui D."/>
            <person name="Ianakiev P."/>
            <person name="Bell-Pedersen D."/>
            <person name="Nelson M.A."/>
            <person name="Werner-Washburne M."/>
            <person name="Selitrennikoff C.P."/>
            <person name="Kinsey J.A."/>
            <person name="Braun E.L."/>
            <person name="Zelter A."/>
            <person name="Schulte U."/>
            <person name="Kothe G.O."/>
            <person name="Jedd G."/>
            <person name="Mewes H.-W."/>
            <person name="Staben C."/>
            <person name="Marcotte E."/>
            <person name="Greenberg D."/>
            <person name="Roy A."/>
            <person name="Foley K."/>
            <person name="Naylor J."/>
            <person name="Stange-Thomann N."/>
            <person name="Barrett R."/>
            <person name="Gnerre S."/>
            <person name="Kamal M."/>
            <person name="Kamvysselis M."/>
            <person name="Mauceli E.W."/>
            <person name="Bielke C."/>
            <person name="Rudd S."/>
            <person name="Frishman D."/>
            <person name="Krystofova S."/>
            <person name="Rasmussen C."/>
            <person name="Metzenberg R.L."/>
            <person name="Perkins D.D."/>
            <person name="Kroken S."/>
            <person name="Cogoni C."/>
            <person name="Macino G."/>
            <person name="Catcheside D.E.A."/>
            <person name="Li W."/>
            <person name="Pratt R.J."/>
            <person name="Osmani S.A."/>
            <person name="DeSouza C.P.C."/>
            <person name="Glass N.L."/>
            <person name="Orbach M.J."/>
            <person name="Berglund J.A."/>
            <person name="Voelker R."/>
            <person name="Yarden O."/>
            <person name="Plamann M."/>
            <person name="Seiler S."/>
            <person name="Dunlap J.C."/>
            <person name="Radford A."/>
            <person name="Aramayo R."/>
            <person name="Natvig D.O."/>
            <person name="Alex L.A."/>
            <person name="Mannhaupt G."/>
            <person name="Ebbole D.J."/>
            <person name="Freitag M."/>
            <person name="Paulsen I."/>
            <person name="Sachs M.S."/>
            <person name="Lander E.S."/>
            <person name="Nusbaum C."/>
            <person name="Birren B.W."/>
        </authorList>
    </citation>
    <scope>NUCLEOTIDE SEQUENCE [LARGE SCALE GENOMIC DNA]</scope>
    <source>
        <strain>ATCC 24698 / 74-OR23-1A / CBS 708.71 / DSM 1257 / FGSC 987</strain>
    </source>
</reference>
<feature type="chain" id="PRO_0000203606" description="Guanine nucleotide-binding protein alpha-2 subunit">
    <location>
        <begin position="1"/>
        <end position="355"/>
    </location>
</feature>
<feature type="domain" description="G-alpha" evidence="2">
    <location>
        <begin position="33"/>
        <end position="355"/>
    </location>
</feature>
<feature type="region of interest" description="Disordered" evidence="3">
    <location>
        <begin position="1"/>
        <end position="20"/>
    </location>
</feature>
<feature type="region of interest" description="G1 motif" evidence="2">
    <location>
        <begin position="36"/>
        <end position="49"/>
    </location>
</feature>
<feature type="region of interest" description="G2 motif" evidence="2">
    <location>
        <begin position="174"/>
        <end position="182"/>
    </location>
</feature>
<feature type="region of interest" description="G3 motif" evidence="2">
    <location>
        <begin position="197"/>
        <end position="206"/>
    </location>
</feature>
<feature type="region of interest" description="G4 motif" evidence="2">
    <location>
        <begin position="266"/>
        <end position="273"/>
    </location>
</feature>
<feature type="region of interest" description="G5 motif" evidence="2">
    <location>
        <begin position="326"/>
        <end position="331"/>
    </location>
</feature>
<feature type="binding site" evidence="1">
    <location>
        <position position="44"/>
    </location>
    <ligand>
        <name>GTP</name>
        <dbReference type="ChEBI" id="CHEBI:37565"/>
    </ligand>
</feature>
<feature type="binding site" evidence="1">
    <location>
        <position position="45"/>
    </location>
    <ligand>
        <name>GTP</name>
        <dbReference type="ChEBI" id="CHEBI:37565"/>
    </ligand>
</feature>
<feature type="binding site" evidence="1">
    <location>
        <position position="46"/>
    </location>
    <ligand>
        <name>GTP</name>
        <dbReference type="ChEBI" id="CHEBI:37565"/>
    </ligand>
</feature>
<feature type="binding site" evidence="1">
    <location>
        <position position="47"/>
    </location>
    <ligand>
        <name>GTP</name>
        <dbReference type="ChEBI" id="CHEBI:37565"/>
    </ligand>
</feature>
<feature type="binding site" evidence="1">
    <location>
        <position position="48"/>
    </location>
    <ligand>
        <name>GTP</name>
        <dbReference type="ChEBI" id="CHEBI:37565"/>
    </ligand>
</feature>
<feature type="binding site" evidence="1">
    <location>
        <position position="48"/>
    </location>
    <ligand>
        <name>Mg(2+)</name>
        <dbReference type="ChEBI" id="CHEBI:18420"/>
    </ligand>
</feature>
<feature type="binding site" evidence="1">
    <location>
        <position position="49"/>
    </location>
    <ligand>
        <name>GTP</name>
        <dbReference type="ChEBI" id="CHEBI:37565"/>
    </ligand>
</feature>
<feature type="binding site" evidence="1">
    <location>
        <position position="151"/>
    </location>
    <ligand>
        <name>GTP</name>
        <dbReference type="ChEBI" id="CHEBI:37565"/>
    </ligand>
</feature>
<feature type="binding site" evidence="1">
    <location>
        <position position="176"/>
    </location>
    <ligand>
        <name>GTP</name>
        <dbReference type="ChEBI" id="CHEBI:37565"/>
    </ligand>
</feature>
<feature type="binding site" evidence="1">
    <location>
        <position position="182"/>
    </location>
    <ligand>
        <name>GTP</name>
        <dbReference type="ChEBI" id="CHEBI:37565"/>
    </ligand>
</feature>
<feature type="binding site" evidence="1">
    <location>
        <position position="182"/>
    </location>
    <ligand>
        <name>Mg(2+)</name>
        <dbReference type="ChEBI" id="CHEBI:18420"/>
    </ligand>
</feature>
<feature type="binding site" evidence="1">
    <location>
        <position position="204"/>
    </location>
    <ligand>
        <name>GTP</name>
        <dbReference type="ChEBI" id="CHEBI:37565"/>
    </ligand>
</feature>
<feature type="binding site" evidence="1">
    <location>
        <position position="270"/>
    </location>
    <ligand>
        <name>GTP</name>
        <dbReference type="ChEBI" id="CHEBI:37565"/>
    </ligand>
</feature>
<feature type="binding site" evidence="1">
    <location>
        <position position="271"/>
    </location>
    <ligand>
        <name>GTP</name>
        <dbReference type="ChEBI" id="CHEBI:37565"/>
    </ligand>
</feature>
<feature type="binding site" evidence="1">
    <location>
        <position position="273"/>
    </location>
    <ligand>
        <name>GTP</name>
        <dbReference type="ChEBI" id="CHEBI:37565"/>
    </ligand>
</feature>
<feature type="binding site" evidence="1">
    <location>
        <position position="328"/>
    </location>
    <ligand>
        <name>GTP</name>
        <dbReference type="ChEBI" id="CHEBI:37565"/>
    </ligand>
</feature>
<feature type="sequence conflict" description="In Ref. 2; AAD01207." evidence="4" ref="2">
    <original>EL</original>
    <variation>DV</variation>
    <location>
        <begin position="19"/>
        <end position="20"/>
    </location>
</feature>
<accession>Q05424</accession>
<accession>Q7S787</accession>
<accession>Q9URK0</accession>
<accession>V5ILJ1</accession>
<proteinExistence type="evidence at transcript level"/>
<evidence type="ECO:0000250" key="1">
    <source>
        <dbReference type="UniProtKB" id="P18064"/>
    </source>
</evidence>
<evidence type="ECO:0000255" key="2">
    <source>
        <dbReference type="PROSITE-ProRule" id="PRU01230"/>
    </source>
</evidence>
<evidence type="ECO:0000256" key="3">
    <source>
        <dbReference type="SAM" id="MobiDB-lite"/>
    </source>
</evidence>
<evidence type="ECO:0000305" key="4"/>
<name>GPA2_NEUCR</name>
<gene>
    <name type="primary">gna-2</name>
    <name type="ORF">B11H7.130</name>
    <name type="ORF">NCU06729</name>
</gene>
<sequence>MCFGGRGKDDEAEASRSRELDKQIRADEKRLSKEVKLLLLGAGESGKSTILKQMKLIYAQGFSKNEKLEWRPVIFANILQSFRLIFDAMNEFNIKLEDEDNEKNMVQMMVDYEMRGDEPLPLEYFEPAKKLWQDSGVRQAIEKGNEFALHDNLQYFCSDLDRLWDRNYVPSDQDLLRSRLRTTGITETVFDLGQLTYRMFDVGGQRSERKKWIHCFENVNCLLFLVAISGYDQCLVEDKDGNQMNEALMLWESIANSHWFTKSALILFLNKIDLFKEKLPRSPITNHGFTDYHGPPDDSKQASKYFMDKFRALNRNPDKEIYGHFTNATDTNLLKITMGSVQDMIIQRNLKQLIL</sequence>